<evidence type="ECO:0000255" key="1">
    <source>
        <dbReference type="HAMAP-Rule" id="MF_00332"/>
    </source>
</evidence>
<evidence type="ECO:0000256" key="2">
    <source>
        <dbReference type="SAM" id="MobiDB-lite"/>
    </source>
</evidence>
<comment type="function">
    <text evidence="1">Acts as a chaperone.</text>
</comment>
<comment type="induction">
    <text evidence="1">By stress conditions e.g. heat shock.</text>
</comment>
<comment type="similarity">
    <text evidence="1">Belongs to the heat shock protein 70 family.</text>
</comment>
<accession>Q4L6T0</accession>
<dbReference type="EMBL" id="AP006716">
    <property type="protein sequence ID" value="BAE04645.1"/>
    <property type="molecule type" value="Genomic_DNA"/>
</dbReference>
<dbReference type="RefSeq" id="WP_011275633.1">
    <property type="nucleotide sequence ID" value="NC_007168.1"/>
</dbReference>
<dbReference type="SMR" id="Q4L6T0"/>
<dbReference type="KEGG" id="sha:SH1336"/>
<dbReference type="eggNOG" id="COG0443">
    <property type="taxonomic scope" value="Bacteria"/>
</dbReference>
<dbReference type="HOGENOM" id="CLU_005965_2_1_9"/>
<dbReference type="OrthoDB" id="9766019at2"/>
<dbReference type="Proteomes" id="UP000000543">
    <property type="component" value="Chromosome"/>
</dbReference>
<dbReference type="GO" id="GO:0005524">
    <property type="term" value="F:ATP binding"/>
    <property type="evidence" value="ECO:0007669"/>
    <property type="project" value="UniProtKB-UniRule"/>
</dbReference>
<dbReference type="GO" id="GO:0140662">
    <property type="term" value="F:ATP-dependent protein folding chaperone"/>
    <property type="evidence" value="ECO:0007669"/>
    <property type="project" value="InterPro"/>
</dbReference>
<dbReference type="GO" id="GO:0051082">
    <property type="term" value="F:unfolded protein binding"/>
    <property type="evidence" value="ECO:0007669"/>
    <property type="project" value="InterPro"/>
</dbReference>
<dbReference type="CDD" id="cd10234">
    <property type="entry name" value="ASKHA_NBD_HSP70_DnaK-like"/>
    <property type="match status" value="1"/>
</dbReference>
<dbReference type="FunFam" id="2.60.34.10:FF:000014">
    <property type="entry name" value="Chaperone protein DnaK HSP70"/>
    <property type="match status" value="1"/>
</dbReference>
<dbReference type="FunFam" id="1.20.1270.10:FF:000001">
    <property type="entry name" value="Molecular chaperone DnaK"/>
    <property type="match status" value="1"/>
</dbReference>
<dbReference type="FunFam" id="3.30.420.40:FF:000071">
    <property type="entry name" value="Molecular chaperone DnaK"/>
    <property type="match status" value="1"/>
</dbReference>
<dbReference type="FunFam" id="3.90.640.10:FF:000003">
    <property type="entry name" value="Molecular chaperone DnaK"/>
    <property type="match status" value="1"/>
</dbReference>
<dbReference type="Gene3D" id="1.20.1270.10">
    <property type="match status" value="1"/>
</dbReference>
<dbReference type="Gene3D" id="3.30.420.40">
    <property type="match status" value="2"/>
</dbReference>
<dbReference type="Gene3D" id="3.90.640.10">
    <property type="entry name" value="Actin, Chain A, domain 4"/>
    <property type="match status" value="1"/>
</dbReference>
<dbReference type="Gene3D" id="2.60.34.10">
    <property type="entry name" value="Substrate Binding Domain Of DNAk, Chain A, domain 1"/>
    <property type="match status" value="1"/>
</dbReference>
<dbReference type="HAMAP" id="MF_00332">
    <property type="entry name" value="DnaK"/>
    <property type="match status" value="1"/>
</dbReference>
<dbReference type="InterPro" id="IPR043129">
    <property type="entry name" value="ATPase_NBD"/>
</dbReference>
<dbReference type="InterPro" id="IPR012725">
    <property type="entry name" value="Chaperone_DnaK"/>
</dbReference>
<dbReference type="InterPro" id="IPR018181">
    <property type="entry name" value="Heat_shock_70_CS"/>
</dbReference>
<dbReference type="InterPro" id="IPR029048">
    <property type="entry name" value="HSP70_C_sf"/>
</dbReference>
<dbReference type="InterPro" id="IPR029047">
    <property type="entry name" value="HSP70_peptide-bd_sf"/>
</dbReference>
<dbReference type="InterPro" id="IPR013126">
    <property type="entry name" value="Hsp_70_fam"/>
</dbReference>
<dbReference type="NCBIfam" id="NF001413">
    <property type="entry name" value="PRK00290.1"/>
    <property type="match status" value="1"/>
</dbReference>
<dbReference type="NCBIfam" id="TIGR02350">
    <property type="entry name" value="prok_dnaK"/>
    <property type="match status" value="1"/>
</dbReference>
<dbReference type="PANTHER" id="PTHR19375">
    <property type="entry name" value="HEAT SHOCK PROTEIN 70KDA"/>
    <property type="match status" value="1"/>
</dbReference>
<dbReference type="Pfam" id="PF00012">
    <property type="entry name" value="HSP70"/>
    <property type="match status" value="1"/>
</dbReference>
<dbReference type="PRINTS" id="PR00301">
    <property type="entry name" value="HEATSHOCK70"/>
</dbReference>
<dbReference type="SUPFAM" id="SSF53067">
    <property type="entry name" value="Actin-like ATPase domain"/>
    <property type="match status" value="2"/>
</dbReference>
<dbReference type="SUPFAM" id="SSF100934">
    <property type="entry name" value="Heat shock protein 70kD (HSP70), C-terminal subdomain"/>
    <property type="match status" value="1"/>
</dbReference>
<dbReference type="SUPFAM" id="SSF100920">
    <property type="entry name" value="Heat shock protein 70kD (HSP70), peptide-binding domain"/>
    <property type="match status" value="1"/>
</dbReference>
<dbReference type="PROSITE" id="PS00297">
    <property type="entry name" value="HSP70_1"/>
    <property type="match status" value="1"/>
</dbReference>
<dbReference type="PROSITE" id="PS00329">
    <property type="entry name" value="HSP70_2"/>
    <property type="match status" value="1"/>
</dbReference>
<dbReference type="PROSITE" id="PS01036">
    <property type="entry name" value="HSP70_3"/>
    <property type="match status" value="1"/>
</dbReference>
<proteinExistence type="inferred from homology"/>
<gene>
    <name evidence="1" type="primary">dnaK</name>
    <name type="ordered locus">SH1336</name>
</gene>
<reference key="1">
    <citation type="journal article" date="2005" name="J. Bacteriol.">
        <title>Whole-genome sequencing of Staphylococcus haemolyticus uncovers the extreme plasticity of its genome and the evolution of human-colonizing staphylococcal species.</title>
        <authorList>
            <person name="Takeuchi F."/>
            <person name="Watanabe S."/>
            <person name="Baba T."/>
            <person name="Yuzawa H."/>
            <person name="Ito T."/>
            <person name="Morimoto Y."/>
            <person name="Kuroda M."/>
            <person name="Cui L."/>
            <person name="Takahashi M."/>
            <person name="Ankai A."/>
            <person name="Baba S."/>
            <person name="Fukui S."/>
            <person name="Lee J.C."/>
            <person name="Hiramatsu K."/>
        </authorList>
    </citation>
    <scope>NUCLEOTIDE SEQUENCE [LARGE SCALE GENOMIC DNA]</scope>
    <source>
        <strain>JCSC1435</strain>
    </source>
</reference>
<keyword id="KW-0067">ATP-binding</keyword>
<keyword id="KW-0143">Chaperone</keyword>
<keyword id="KW-0547">Nucleotide-binding</keyword>
<keyword id="KW-0597">Phosphoprotein</keyword>
<keyword id="KW-0346">Stress response</keyword>
<protein>
    <recommendedName>
        <fullName evidence="1">Chaperone protein DnaK</fullName>
    </recommendedName>
    <alternativeName>
        <fullName evidence="1">HSP70</fullName>
    </alternativeName>
    <alternativeName>
        <fullName evidence="1">Heat shock 70 kDa protein</fullName>
    </alternativeName>
    <alternativeName>
        <fullName evidence="1">Heat shock protein 70</fullName>
    </alternativeName>
</protein>
<organism>
    <name type="scientific">Staphylococcus haemolyticus (strain JCSC1435)</name>
    <dbReference type="NCBI Taxonomy" id="279808"/>
    <lineage>
        <taxon>Bacteria</taxon>
        <taxon>Bacillati</taxon>
        <taxon>Bacillota</taxon>
        <taxon>Bacilli</taxon>
        <taxon>Bacillales</taxon>
        <taxon>Staphylococcaceae</taxon>
        <taxon>Staphylococcus</taxon>
    </lineage>
</organism>
<name>DNAK_STAHJ</name>
<sequence length="611" mass="66270">MSKVIGIDLGTTNSCVAVLEGDEPKVIQNPEGARTTPSVVAFKNGETQVGEVAKRQAITNPNTVQSIKRHMGTDYKVDIEGKSYTPQEISAMVLQNLKNTAESYLGDKVDKAVITVPAYFNDAERQATKDAGKIAGLEVERIINEPTAAALAYGLDKTDQDQKVLVFDLGGGTFDVSILELGDGVFEVLSTAGDNKLGGDDFDQVIIDYLVSEFKKENGVDLSQDKMALQRLKDAAEKAKKDLSGVSQTQISLPFISAGESGPLHLEISLTRSKFEELADSLIRRTMEPTRQALKDAGLSTSEIDEVILVGGSTRIPAVQEAVKKEIGKDPHKGVNPDEVVAMGAAIQGGVITGDVKDVVLLDVTPLSLGIEIMGGRMNTLIERNTTIPTSKSQVYSTAADNQPAVDIHVLQGERPMASDNKTLGRFQLTDIPPAPRGVPQIEVTFDIDKNGIVNVTAKDLGTNKEQNITIQSSSALSDEEIDRMVKDAEENAEADKKRREEVDLRNEADSLVFQVEKTITDLGDNISEEDKSNAESKKDALKSALEGQDIEDIKAKKEELEKVIQDLSAKVYQQAQQAQQQAQDGAQQTQNDSNVEDAEFKEVNDDEDKK</sequence>
<feature type="chain" id="PRO_0000226012" description="Chaperone protein DnaK">
    <location>
        <begin position="1"/>
        <end position="611"/>
    </location>
</feature>
<feature type="region of interest" description="Disordered" evidence="2">
    <location>
        <begin position="525"/>
        <end position="548"/>
    </location>
</feature>
<feature type="region of interest" description="Disordered" evidence="2">
    <location>
        <begin position="573"/>
        <end position="611"/>
    </location>
</feature>
<feature type="compositionally biased region" description="Basic and acidic residues" evidence="2">
    <location>
        <begin position="529"/>
        <end position="542"/>
    </location>
</feature>
<feature type="compositionally biased region" description="Low complexity" evidence="2">
    <location>
        <begin position="574"/>
        <end position="591"/>
    </location>
</feature>
<feature type="compositionally biased region" description="Basic and acidic residues" evidence="2">
    <location>
        <begin position="599"/>
        <end position="611"/>
    </location>
</feature>
<feature type="modified residue" description="Phosphothreonine; by autocatalysis" evidence="1">
    <location>
        <position position="173"/>
    </location>
</feature>